<gene>
    <name type="primary">TEF4</name>
    <name type="synonym">EFC1</name>
    <name type="ordered locus">YKL081W</name>
</gene>
<feature type="initiator methionine" description="Removed" evidence="7">
    <location>
        <position position="1"/>
    </location>
</feature>
<feature type="chain" id="PRO_0000208832" description="Elongation factor 1-gamma 2">
    <location>
        <begin position="2"/>
        <end position="412"/>
    </location>
</feature>
<feature type="domain" description="GST N-terminal">
    <location>
        <begin position="2"/>
        <end position="77"/>
    </location>
</feature>
<feature type="domain" description="GST C-terminal">
    <location>
        <begin position="86"/>
        <end position="217"/>
    </location>
</feature>
<feature type="domain" description="EF-1-gamma C-terminal" evidence="2">
    <location>
        <begin position="251"/>
        <end position="412"/>
    </location>
</feature>
<feature type="region of interest" description="Disordered" evidence="3">
    <location>
        <begin position="216"/>
        <end position="253"/>
    </location>
</feature>
<feature type="compositionally biased region" description="Basic and acidic residues" evidence="3">
    <location>
        <begin position="220"/>
        <end position="247"/>
    </location>
</feature>
<feature type="modified residue" description="N-acetylserine" evidence="7">
    <location>
        <position position="2"/>
    </location>
</feature>
<feature type="sequence conflict" description="In Ref. 1; AAA21473." evidence="6" ref="1">
    <original>I</original>
    <variation>L</variation>
    <location>
        <position position="8"/>
    </location>
</feature>
<feature type="sequence conflict" description="In Ref. 1; AAA21473." evidence="6" ref="1">
    <location>
        <position position="347"/>
    </location>
</feature>
<evidence type="ECO:0000250" key="1"/>
<evidence type="ECO:0000255" key="2">
    <source>
        <dbReference type="PROSITE-ProRule" id="PRU00519"/>
    </source>
</evidence>
<evidence type="ECO:0000256" key="3">
    <source>
        <dbReference type="SAM" id="MobiDB-lite"/>
    </source>
</evidence>
<evidence type="ECO:0000269" key="4">
    <source>
    </source>
</evidence>
<evidence type="ECO:0000269" key="5">
    <source>
    </source>
</evidence>
<evidence type="ECO:0000305" key="6"/>
<evidence type="ECO:0007744" key="7">
    <source>
    </source>
</evidence>
<comment type="function">
    <text evidence="1">Subunit of the eukaryotic elongation factor 1 complex (eEF1). Probably plays a role in anchoring the complex to other cellular components (By similarity).</text>
</comment>
<comment type="pathway">
    <text>Protein biosynthesis; polypeptide chain elongation.</text>
</comment>
<comment type="subunit">
    <text evidence="1">The eukaryotic elongation factor 1 complex (eEF1) is probably a heterohexamer. Two trimeric complexes, each composed of eEF1A (TEF1 or TEF2), eEF1Balpha (EFB1) and eEF1Bgamma (CAM1 or TEF4), are probably dimerized via the eF1Bgamma subunits. The eEF1B subcomplex with the GEF activity is formed of eEF1Balpha and eEF1Bgamma. TEF4 interacts with EFB1 (By similarity).</text>
</comment>
<comment type="interaction">
    <interactant intactId="EBI-6329">
        <id>P36008</id>
    </interactant>
    <interactant intactId="EBI-22787">
        <id>P43573</id>
        <label>BUD27</label>
    </interactant>
    <organismsDiffer>false</organismsDiffer>
    <experiments>3</experiments>
</comment>
<comment type="subcellular location">
    <subcellularLocation>
        <location evidence="4">Cytoplasm</location>
    </subcellularLocation>
</comment>
<comment type="miscellaneous">
    <text evidence="5">Present with 102130 molecules/cell in log phase SD medium.</text>
</comment>
<name>EF1G2_YEAST</name>
<keyword id="KW-0007">Acetylation</keyword>
<keyword id="KW-0963">Cytoplasm</keyword>
<keyword id="KW-0251">Elongation factor</keyword>
<keyword id="KW-0648">Protein biosynthesis</keyword>
<keyword id="KW-1185">Reference proteome</keyword>
<dbReference type="EMBL" id="L01880">
    <property type="protein sequence ID" value="AAA21473.1"/>
    <property type="molecule type" value="Genomic_DNA"/>
</dbReference>
<dbReference type="EMBL" id="Z28081">
    <property type="protein sequence ID" value="CAA81919.1"/>
    <property type="molecule type" value="Genomic_DNA"/>
</dbReference>
<dbReference type="EMBL" id="Z28080">
    <property type="protein sequence ID" value="CAA81918.1"/>
    <property type="molecule type" value="Genomic_DNA"/>
</dbReference>
<dbReference type="EMBL" id="M77143">
    <property type="status" value="NOT_ANNOTATED_CDS"/>
    <property type="molecule type" value="Genomic_DNA"/>
</dbReference>
<dbReference type="EMBL" id="BK006944">
    <property type="protein sequence ID" value="DAA09076.1"/>
    <property type="molecule type" value="Genomic_DNA"/>
</dbReference>
<dbReference type="PIR" id="S37906">
    <property type="entry name" value="S37906"/>
</dbReference>
<dbReference type="RefSeq" id="NP_012842.1">
    <property type="nucleotide sequence ID" value="NM_001179647.1"/>
</dbReference>
<dbReference type="SMR" id="P36008"/>
<dbReference type="BioGRID" id="34051">
    <property type="interactions" value="404"/>
</dbReference>
<dbReference type="ComplexPortal" id="CPX-425">
    <property type="entry name" value="Elongation Factor eEF1 complex, variant TEF4"/>
</dbReference>
<dbReference type="DIP" id="DIP-6386N"/>
<dbReference type="FunCoup" id="P36008">
    <property type="interactions" value="1520"/>
</dbReference>
<dbReference type="IntAct" id="P36008">
    <property type="interactions" value="81"/>
</dbReference>
<dbReference type="MINT" id="P36008"/>
<dbReference type="STRING" id="4932.YKL081W"/>
<dbReference type="CarbonylDB" id="P36008"/>
<dbReference type="iPTMnet" id="P36008"/>
<dbReference type="PaxDb" id="4932-YKL081W"/>
<dbReference type="PeptideAtlas" id="P36008"/>
<dbReference type="EnsemblFungi" id="YKL081W_mRNA">
    <property type="protein sequence ID" value="YKL081W"/>
    <property type="gene ID" value="YKL081W"/>
</dbReference>
<dbReference type="GeneID" id="853781"/>
<dbReference type="KEGG" id="sce:YKL081W"/>
<dbReference type="AGR" id="SGD:S000001564"/>
<dbReference type="SGD" id="S000001564">
    <property type="gene designation" value="TEF4"/>
</dbReference>
<dbReference type="VEuPathDB" id="FungiDB:YKL081W"/>
<dbReference type="eggNOG" id="KOG0867">
    <property type="taxonomic scope" value="Eukaryota"/>
</dbReference>
<dbReference type="eggNOG" id="KOG1627">
    <property type="taxonomic scope" value="Eukaryota"/>
</dbReference>
<dbReference type="GeneTree" id="ENSGT00940000176354"/>
<dbReference type="HOGENOM" id="CLU_011226_3_0_1"/>
<dbReference type="InParanoid" id="P36008"/>
<dbReference type="OMA" id="FGHFPIN"/>
<dbReference type="OrthoDB" id="249703at2759"/>
<dbReference type="BioCyc" id="YEAST:G3O-31876-MONOMER"/>
<dbReference type="UniPathway" id="UPA00345"/>
<dbReference type="BioGRID-ORCS" id="853781">
    <property type="hits" value="0 hits in 10 CRISPR screens"/>
</dbReference>
<dbReference type="CD-CODE" id="E03F929F">
    <property type="entry name" value="Stress granule"/>
</dbReference>
<dbReference type="PRO" id="PR:P36008"/>
<dbReference type="Proteomes" id="UP000002311">
    <property type="component" value="Chromosome XI"/>
</dbReference>
<dbReference type="RNAct" id="P36008">
    <property type="molecule type" value="protein"/>
</dbReference>
<dbReference type="GO" id="GO:0005737">
    <property type="term" value="C:cytoplasm"/>
    <property type="evidence" value="ECO:0000318"/>
    <property type="project" value="GO_Central"/>
</dbReference>
<dbReference type="GO" id="GO:0010494">
    <property type="term" value="C:cytoplasmic stress granule"/>
    <property type="evidence" value="ECO:0000314"/>
    <property type="project" value="SGD"/>
</dbReference>
<dbReference type="GO" id="GO:0005853">
    <property type="term" value="C:eukaryotic translation elongation factor 1 complex"/>
    <property type="evidence" value="ECO:0000303"/>
    <property type="project" value="ComplexPortal"/>
</dbReference>
<dbReference type="GO" id="GO:0005739">
    <property type="term" value="C:mitochondrion"/>
    <property type="evidence" value="ECO:0007005"/>
    <property type="project" value="SGD"/>
</dbReference>
<dbReference type="GO" id="GO:0005634">
    <property type="term" value="C:nucleus"/>
    <property type="evidence" value="ECO:0000318"/>
    <property type="project" value="GO_Central"/>
</dbReference>
<dbReference type="GO" id="GO:0005840">
    <property type="term" value="C:ribosome"/>
    <property type="evidence" value="ECO:0000314"/>
    <property type="project" value="ComplexPortal"/>
</dbReference>
<dbReference type="GO" id="GO:0005085">
    <property type="term" value="F:guanyl-nucleotide exchange factor activity"/>
    <property type="evidence" value="ECO:0000314"/>
    <property type="project" value="SGD"/>
</dbReference>
<dbReference type="GO" id="GO:0003746">
    <property type="term" value="F:translation elongation factor activity"/>
    <property type="evidence" value="ECO:0000304"/>
    <property type="project" value="SGD"/>
</dbReference>
<dbReference type="GO" id="GO:0006414">
    <property type="term" value="P:translational elongation"/>
    <property type="evidence" value="ECO:0000314"/>
    <property type="project" value="ComplexPortal"/>
</dbReference>
<dbReference type="CDD" id="cd03181">
    <property type="entry name" value="GST_C_EF1Bgamma_like"/>
    <property type="match status" value="1"/>
</dbReference>
<dbReference type="CDD" id="cd03044">
    <property type="entry name" value="GST_N_EF1Bgamma"/>
    <property type="match status" value="1"/>
</dbReference>
<dbReference type="FunFam" id="1.20.1050.10:FF:000006">
    <property type="entry name" value="Elongation factor 1 gamma"/>
    <property type="match status" value="1"/>
</dbReference>
<dbReference type="FunFam" id="3.40.30.10:FF:000142">
    <property type="entry name" value="Elongation factor 1 gamma"/>
    <property type="match status" value="1"/>
</dbReference>
<dbReference type="FunFam" id="3.30.70.1010:FF:000001">
    <property type="entry name" value="Elongation factor 1-gamma 1"/>
    <property type="match status" value="1"/>
</dbReference>
<dbReference type="Gene3D" id="1.20.1050.10">
    <property type="match status" value="1"/>
</dbReference>
<dbReference type="Gene3D" id="3.40.30.10">
    <property type="entry name" value="Glutaredoxin"/>
    <property type="match status" value="1"/>
</dbReference>
<dbReference type="Gene3D" id="3.30.70.1010">
    <property type="entry name" value="Translation elongation factor EF1B, gamma chain, conserved domain"/>
    <property type="match status" value="1"/>
</dbReference>
<dbReference type="InterPro" id="IPR050802">
    <property type="entry name" value="EF-GSTs"/>
</dbReference>
<dbReference type="InterPro" id="IPR001662">
    <property type="entry name" value="EF1B_G_C"/>
</dbReference>
<dbReference type="InterPro" id="IPR036433">
    <property type="entry name" value="EF1B_G_C_sf"/>
</dbReference>
<dbReference type="InterPro" id="IPR010987">
    <property type="entry name" value="Glutathione-S-Trfase_C-like"/>
</dbReference>
<dbReference type="InterPro" id="IPR036282">
    <property type="entry name" value="Glutathione-S-Trfase_C_sf"/>
</dbReference>
<dbReference type="InterPro" id="IPR004045">
    <property type="entry name" value="Glutathione_S-Trfase_N"/>
</dbReference>
<dbReference type="InterPro" id="IPR004046">
    <property type="entry name" value="GST_C"/>
</dbReference>
<dbReference type="InterPro" id="IPR036249">
    <property type="entry name" value="Thioredoxin-like_sf"/>
</dbReference>
<dbReference type="PANTHER" id="PTHR43986">
    <property type="entry name" value="ELONGATION FACTOR 1-GAMMA"/>
    <property type="match status" value="1"/>
</dbReference>
<dbReference type="PANTHER" id="PTHR43986:SF1">
    <property type="entry name" value="ELONGATION FACTOR 1-GAMMA"/>
    <property type="match status" value="1"/>
</dbReference>
<dbReference type="Pfam" id="PF00647">
    <property type="entry name" value="EF1G"/>
    <property type="match status" value="1"/>
</dbReference>
<dbReference type="Pfam" id="PF00043">
    <property type="entry name" value="GST_C"/>
    <property type="match status" value="1"/>
</dbReference>
<dbReference type="Pfam" id="PF02798">
    <property type="entry name" value="GST_N"/>
    <property type="match status" value="1"/>
</dbReference>
<dbReference type="SMART" id="SM01183">
    <property type="entry name" value="EF1G"/>
    <property type="match status" value="1"/>
</dbReference>
<dbReference type="SUPFAM" id="SSF89942">
    <property type="entry name" value="eEF1-gamma domain"/>
    <property type="match status" value="1"/>
</dbReference>
<dbReference type="SUPFAM" id="SSF47616">
    <property type="entry name" value="GST C-terminal domain-like"/>
    <property type="match status" value="1"/>
</dbReference>
<dbReference type="SUPFAM" id="SSF52833">
    <property type="entry name" value="Thioredoxin-like"/>
    <property type="match status" value="1"/>
</dbReference>
<dbReference type="PROSITE" id="PS50040">
    <property type="entry name" value="EF1G_C"/>
    <property type="match status" value="1"/>
</dbReference>
<dbReference type="PROSITE" id="PS50405">
    <property type="entry name" value="GST_CTER"/>
    <property type="match status" value="1"/>
</dbReference>
<dbReference type="PROSITE" id="PS50404">
    <property type="entry name" value="GST_NTER"/>
    <property type="match status" value="1"/>
</dbReference>
<organism>
    <name type="scientific">Saccharomyces cerevisiae (strain ATCC 204508 / S288c)</name>
    <name type="common">Baker's yeast</name>
    <dbReference type="NCBI Taxonomy" id="559292"/>
    <lineage>
        <taxon>Eukaryota</taxon>
        <taxon>Fungi</taxon>
        <taxon>Dikarya</taxon>
        <taxon>Ascomycota</taxon>
        <taxon>Saccharomycotina</taxon>
        <taxon>Saccharomycetes</taxon>
        <taxon>Saccharomycetales</taxon>
        <taxon>Saccharomycetaceae</taxon>
        <taxon>Saccharomyces</taxon>
    </lineage>
</organism>
<accession>P36008</accession>
<accession>D6VXK6</accession>
<protein>
    <recommendedName>
        <fullName>Elongation factor 1-gamma 2</fullName>
        <shortName>EF-1-gamma 2</shortName>
    </recommendedName>
    <alternativeName>
        <fullName>Eukaryotic elongation factor 1Bgamma 2</fullName>
        <shortName>eEF1Bgamma 2</shortName>
    </alternativeName>
    <alternativeName>
        <fullName>Translation elongation factor 1B gamma 2</fullName>
    </alternativeName>
</protein>
<sequence>MSQGTLYINRSPRNYASEALISYFKLDVKIVDLEQSSEFASLFPLKQAPAFLGPKGLKLTEALAIQFYLANQVADEKERARLLGSDVIEKSQILRWASLANSDVMSNIARPFLSFKGLIPYNKKDVDACFVKIDNLAAVFDARLRDYTFVATENISLGDLHAAGSWAFGLATILGPEWRAKHPHLMRWFNTVAASPIVKTPFAEVKLAEKALTYTPPKKQKAEKPKAEKSKAEKKKDEAKPADDAAPAKKPKHPLEALGKSTFVLDDWKRKYSNDDTRPVALPWFWEHYNPEEYSIWKVGYKYNDELTLTFMSNNLVGGFFNRLSASTKYMFGCLVVYGENNNNGIVGAVMVRGQDFAPAFDVAPDWESYEYTKLDPTKEEDKEFVNNMWAWDKPVVVNGEDKEIVDGKVLK</sequence>
<proteinExistence type="evidence at protein level"/>
<reference key="1">
    <citation type="journal article" date="1994" name="Nucleic Acids Res.">
        <title>Multiple genes encode the translation elongation factor EF-1 gamma in Saccharomyces cerevisiae.</title>
        <authorList>
            <person name="Kinzy T.G."/>
            <person name="Ripmaster T.L."/>
            <person name="Woolford J.L. Jr."/>
        </authorList>
    </citation>
    <scope>NUCLEOTIDE SEQUENCE [GENOMIC DNA]</scope>
</reference>
<reference key="2">
    <citation type="journal article" date="1994" name="Nature">
        <title>Complete DNA sequence of yeast chromosome XI.</title>
        <authorList>
            <person name="Dujon B."/>
            <person name="Alexandraki D."/>
            <person name="Andre B."/>
            <person name="Ansorge W."/>
            <person name="Baladron V."/>
            <person name="Ballesta J.P.G."/>
            <person name="Banrevi A."/>
            <person name="Bolle P.-A."/>
            <person name="Bolotin-Fukuhara M."/>
            <person name="Bossier P."/>
            <person name="Bou G."/>
            <person name="Boyer J."/>
            <person name="Buitrago M.J."/>
            <person name="Cheret G."/>
            <person name="Colleaux L."/>
            <person name="Daignan-Fornier B."/>
            <person name="del Rey F."/>
            <person name="Dion C."/>
            <person name="Domdey H."/>
            <person name="Duesterhoeft A."/>
            <person name="Duesterhus S."/>
            <person name="Entian K.-D."/>
            <person name="Erfle H."/>
            <person name="Esteban P.F."/>
            <person name="Feldmann H."/>
            <person name="Fernandes L."/>
            <person name="Fobo G.M."/>
            <person name="Fritz C."/>
            <person name="Fukuhara H."/>
            <person name="Gabel C."/>
            <person name="Gaillon L."/>
            <person name="Garcia-Cantalejo J.M."/>
            <person name="Garcia-Ramirez J.J."/>
            <person name="Gent M.E."/>
            <person name="Ghazvini M."/>
            <person name="Goffeau A."/>
            <person name="Gonzalez A."/>
            <person name="Grothues D."/>
            <person name="Guerreiro P."/>
            <person name="Hegemann J.H."/>
            <person name="Hewitt N."/>
            <person name="Hilger F."/>
            <person name="Hollenberg C.P."/>
            <person name="Horaitis O."/>
            <person name="Indge K.J."/>
            <person name="Jacquier A."/>
            <person name="James C.M."/>
            <person name="Jauniaux J.-C."/>
            <person name="Jimenez A."/>
            <person name="Keuchel H."/>
            <person name="Kirchrath L."/>
            <person name="Kleine K."/>
            <person name="Koetter P."/>
            <person name="Legrain P."/>
            <person name="Liebl S."/>
            <person name="Louis E.J."/>
            <person name="Maia e Silva A."/>
            <person name="Marck C."/>
            <person name="Monnier A.-L."/>
            <person name="Moestl D."/>
            <person name="Mueller S."/>
            <person name="Obermaier B."/>
            <person name="Oliver S.G."/>
            <person name="Pallier C."/>
            <person name="Pascolo S."/>
            <person name="Pfeiffer F."/>
            <person name="Philippsen P."/>
            <person name="Planta R.J."/>
            <person name="Pohl F.M."/>
            <person name="Pohl T.M."/>
            <person name="Poehlmann R."/>
            <person name="Portetelle D."/>
            <person name="Purnelle B."/>
            <person name="Puzos V."/>
            <person name="Ramezani Rad M."/>
            <person name="Rasmussen S.W."/>
            <person name="Remacha M.A."/>
            <person name="Revuelta J.L."/>
            <person name="Richard G.-F."/>
            <person name="Rieger M."/>
            <person name="Rodrigues-Pousada C."/>
            <person name="Rose M."/>
            <person name="Rupp T."/>
            <person name="Santos M.A."/>
            <person name="Schwager C."/>
            <person name="Sensen C."/>
            <person name="Skala J."/>
            <person name="Soares H."/>
            <person name="Sor F."/>
            <person name="Stegemann J."/>
            <person name="Tettelin H."/>
            <person name="Thierry A."/>
            <person name="Tzermia M."/>
            <person name="Urrestarazu L.A."/>
            <person name="van Dyck L."/>
            <person name="van Vliet-Reedijk J.C."/>
            <person name="Valens M."/>
            <person name="Vandenbol M."/>
            <person name="Vilela C."/>
            <person name="Vissers S."/>
            <person name="von Wettstein D."/>
            <person name="Voss H."/>
            <person name="Wiemann S."/>
            <person name="Xu G."/>
            <person name="Zimmermann J."/>
            <person name="Haasemann M."/>
            <person name="Becker I."/>
            <person name="Mewes H.-W."/>
        </authorList>
    </citation>
    <scope>NUCLEOTIDE SEQUENCE [LARGE SCALE GENOMIC DNA]</scope>
    <source>
        <strain>ATCC 204508 / S288c</strain>
    </source>
</reference>
<reference key="3">
    <citation type="journal article" date="2014" name="G3 (Bethesda)">
        <title>The reference genome sequence of Saccharomyces cerevisiae: Then and now.</title>
        <authorList>
            <person name="Engel S.R."/>
            <person name="Dietrich F.S."/>
            <person name="Fisk D.G."/>
            <person name="Binkley G."/>
            <person name="Balakrishnan R."/>
            <person name="Costanzo M.C."/>
            <person name="Dwight S.S."/>
            <person name="Hitz B.C."/>
            <person name="Karra K."/>
            <person name="Nash R.S."/>
            <person name="Weng S."/>
            <person name="Wong E.D."/>
            <person name="Lloyd P."/>
            <person name="Skrzypek M.S."/>
            <person name="Miyasato S.R."/>
            <person name="Simison M."/>
            <person name="Cherry J.M."/>
        </authorList>
    </citation>
    <scope>GENOME REANNOTATION</scope>
    <source>
        <strain>ATCC 204508 / S288c</strain>
    </source>
</reference>
<reference key="4">
    <citation type="journal article" date="1992" name="J. Biol. Chem.">
        <title>Cloning and mutational analysis of the gene encoding subunit C of yeast vacuolar H(+)-ATPase.</title>
        <authorList>
            <person name="Beltran C."/>
            <person name="Kopecky J."/>
            <person name="Pan Y.-C.E."/>
            <person name="Nelson H."/>
            <person name="Nelson N."/>
        </authorList>
    </citation>
    <scope>NUCLEOTIDE SEQUENCE [GENOMIC DNA] OF 257-412</scope>
</reference>
<reference key="5">
    <citation type="journal article" date="2003" name="Nature">
        <title>Global analysis of protein localization in budding yeast.</title>
        <authorList>
            <person name="Huh W.-K."/>
            <person name="Falvo J.V."/>
            <person name="Gerke L.C."/>
            <person name="Carroll A.S."/>
            <person name="Howson R.W."/>
            <person name="Weissman J.S."/>
            <person name="O'Shea E.K."/>
        </authorList>
    </citation>
    <scope>SUBCELLULAR LOCATION [LARGE SCALE ANALYSIS]</scope>
</reference>
<reference key="6">
    <citation type="journal article" date="2003" name="Nature">
        <title>Global analysis of protein expression in yeast.</title>
        <authorList>
            <person name="Ghaemmaghami S."/>
            <person name="Huh W.-K."/>
            <person name="Bower K."/>
            <person name="Howson R.W."/>
            <person name="Belle A."/>
            <person name="Dephoure N."/>
            <person name="O'Shea E.K."/>
            <person name="Weissman J.S."/>
        </authorList>
    </citation>
    <scope>LEVEL OF PROTEIN EXPRESSION [LARGE SCALE ANALYSIS]</scope>
</reference>
<reference key="7">
    <citation type="journal article" date="2012" name="Proc. Natl. Acad. Sci. U.S.A.">
        <title>N-terminal acetylome analyses and functional insights of the N-terminal acetyltransferase NatB.</title>
        <authorList>
            <person name="Van Damme P."/>
            <person name="Lasa M."/>
            <person name="Polevoda B."/>
            <person name="Gazquez C."/>
            <person name="Elosegui-Artola A."/>
            <person name="Kim D.S."/>
            <person name="De Juan-Pardo E."/>
            <person name="Demeyer K."/>
            <person name="Hole K."/>
            <person name="Larrea E."/>
            <person name="Timmerman E."/>
            <person name="Prieto J."/>
            <person name="Arnesen T."/>
            <person name="Sherman F."/>
            <person name="Gevaert K."/>
            <person name="Aldabe R."/>
        </authorList>
    </citation>
    <scope>ACETYLATION [LARGE SCALE ANALYSIS] AT SER-2</scope>
    <scope>CLEAVAGE OF INITIATOR METHIONINE [LARGE SCALE ANALYSIS]</scope>
    <scope>IDENTIFICATION BY MASS SPECTROMETRY [LARGE SCALE ANALYSIS]</scope>
</reference>